<accession>B2SFE5</accession>
<evidence type="ECO:0000255" key="1">
    <source>
        <dbReference type="HAMAP-Rule" id="MF_00402"/>
    </source>
</evidence>
<evidence type="ECO:0000305" key="2"/>
<gene>
    <name evidence="1" type="primary">rplS</name>
    <name type="ordered locus">FTM_0218</name>
</gene>
<keyword id="KW-0687">Ribonucleoprotein</keyword>
<keyword id="KW-0689">Ribosomal protein</keyword>
<feature type="chain" id="PRO_1000193843" description="Large ribosomal subunit protein bL19">
    <location>
        <begin position="1"/>
        <end position="115"/>
    </location>
</feature>
<dbReference type="EMBL" id="CP000915">
    <property type="protein sequence ID" value="ACD30298.1"/>
    <property type="molecule type" value="Genomic_DNA"/>
</dbReference>
<dbReference type="SMR" id="B2SFE5"/>
<dbReference type="KEGG" id="ftm:FTM_0218"/>
<dbReference type="HOGENOM" id="CLU_103507_2_2_6"/>
<dbReference type="GO" id="GO:0022625">
    <property type="term" value="C:cytosolic large ribosomal subunit"/>
    <property type="evidence" value="ECO:0007669"/>
    <property type="project" value="TreeGrafter"/>
</dbReference>
<dbReference type="GO" id="GO:0003735">
    <property type="term" value="F:structural constituent of ribosome"/>
    <property type="evidence" value="ECO:0007669"/>
    <property type="project" value="InterPro"/>
</dbReference>
<dbReference type="GO" id="GO:0006412">
    <property type="term" value="P:translation"/>
    <property type="evidence" value="ECO:0007669"/>
    <property type="project" value="UniProtKB-UniRule"/>
</dbReference>
<dbReference type="FunFam" id="2.30.30.790:FF:000001">
    <property type="entry name" value="50S ribosomal protein L19"/>
    <property type="match status" value="1"/>
</dbReference>
<dbReference type="Gene3D" id="2.30.30.790">
    <property type="match status" value="1"/>
</dbReference>
<dbReference type="HAMAP" id="MF_00402">
    <property type="entry name" value="Ribosomal_bL19"/>
    <property type="match status" value="1"/>
</dbReference>
<dbReference type="InterPro" id="IPR001857">
    <property type="entry name" value="Ribosomal_bL19"/>
</dbReference>
<dbReference type="InterPro" id="IPR018257">
    <property type="entry name" value="Ribosomal_bL19_CS"/>
</dbReference>
<dbReference type="InterPro" id="IPR038657">
    <property type="entry name" value="Ribosomal_bL19_sf"/>
</dbReference>
<dbReference type="InterPro" id="IPR008991">
    <property type="entry name" value="Translation_prot_SH3-like_sf"/>
</dbReference>
<dbReference type="NCBIfam" id="TIGR01024">
    <property type="entry name" value="rplS_bact"/>
    <property type="match status" value="1"/>
</dbReference>
<dbReference type="PANTHER" id="PTHR15680:SF9">
    <property type="entry name" value="LARGE RIBOSOMAL SUBUNIT PROTEIN BL19M"/>
    <property type="match status" value="1"/>
</dbReference>
<dbReference type="PANTHER" id="PTHR15680">
    <property type="entry name" value="RIBOSOMAL PROTEIN L19"/>
    <property type="match status" value="1"/>
</dbReference>
<dbReference type="Pfam" id="PF01245">
    <property type="entry name" value="Ribosomal_L19"/>
    <property type="match status" value="1"/>
</dbReference>
<dbReference type="PIRSF" id="PIRSF002191">
    <property type="entry name" value="Ribosomal_L19"/>
    <property type="match status" value="1"/>
</dbReference>
<dbReference type="PRINTS" id="PR00061">
    <property type="entry name" value="RIBOSOMALL19"/>
</dbReference>
<dbReference type="SUPFAM" id="SSF50104">
    <property type="entry name" value="Translation proteins SH3-like domain"/>
    <property type="match status" value="1"/>
</dbReference>
<dbReference type="PROSITE" id="PS01015">
    <property type="entry name" value="RIBOSOMAL_L19"/>
    <property type="match status" value="1"/>
</dbReference>
<organism>
    <name type="scientific">Francisella tularensis subsp. mediasiatica (strain FSC147)</name>
    <dbReference type="NCBI Taxonomy" id="441952"/>
    <lineage>
        <taxon>Bacteria</taxon>
        <taxon>Pseudomonadati</taxon>
        <taxon>Pseudomonadota</taxon>
        <taxon>Gammaproteobacteria</taxon>
        <taxon>Thiotrichales</taxon>
        <taxon>Francisellaceae</taxon>
        <taxon>Francisella</taxon>
    </lineage>
</organism>
<name>RL19_FRATM</name>
<protein>
    <recommendedName>
        <fullName evidence="1">Large ribosomal subunit protein bL19</fullName>
    </recommendedName>
    <alternativeName>
        <fullName evidence="2">50S ribosomal protein L19</fullName>
    </alternativeName>
</protein>
<sequence length="115" mass="13295">MKNKFVELVEKSQLRTDLPEFNPGDSITVNLWIKEGDKQRIQAFKGFVLRKRNRGLHSAFTVRKMSSGMGVERTFQTHSPLIDSIIVEKRADVRRAKLYYMRGLTGKAARIKEKV</sequence>
<reference key="1">
    <citation type="journal article" date="2009" name="PLoS Pathog.">
        <title>Molecular evolutionary consequences of niche restriction in Francisella tularensis, a facultative intracellular pathogen.</title>
        <authorList>
            <person name="Larsson P."/>
            <person name="Elfsmark D."/>
            <person name="Svensson K."/>
            <person name="Wikstroem P."/>
            <person name="Forsman M."/>
            <person name="Brettin T."/>
            <person name="Keim P."/>
            <person name="Johansson A."/>
        </authorList>
    </citation>
    <scope>NUCLEOTIDE SEQUENCE [LARGE SCALE GENOMIC DNA]</scope>
    <source>
        <strain>FSC147</strain>
    </source>
</reference>
<proteinExistence type="inferred from homology"/>
<comment type="function">
    <text evidence="1">This protein is located at the 30S-50S ribosomal subunit interface and may play a role in the structure and function of the aminoacyl-tRNA binding site.</text>
</comment>
<comment type="similarity">
    <text evidence="1">Belongs to the bacterial ribosomal protein bL19 family.</text>
</comment>